<protein>
    <recommendedName>
        <fullName evidence="1">Small ribosomal subunit protein uS3</fullName>
    </recommendedName>
    <alternativeName>
        <fullName evidence="2">30S ribosomal protein S3</fullName>
    </alternativeName>
</protein>
<reference key="1">
    <citation type="journal article" date="2006" name="Mol. Microbiol.">
        <title>Role of pathogenicity island-associated integrases in the genome plasticity of uropathogenic Escherichia coli strain 536.</title>
        <authorList>
            <person name="Hochhut B."/>
            <person name="Wilde C."/>
            <person name="Balling G."/>
            <person name="Middendorf B."/>
            <person name="Dobrindt U."/>
            <person name="Brzuszkiewicz E."/>
            <person name="Gottschalk G."/>
            <person name="Carniel E."/>
            <person name="Hacker J."/>
        </authorList>
    </citation>
    <scope>NUCLEOTIDE SEQUENCE [LARGE SCALE GENOMIC DNA]</scope>
    <source>
        <strain>536 / UPEC</strain>
    </source>
</reference>
<comment type="function">
    <text evidence="1">Binds the lower part of the 30S subunit head. Binds mRNA in the 70S ribosome, positioning it for translation.</text>
</comment>
<comment type="subunit">
    <text evidence="1">Part of the 30S ribosomal subunit. Forms a tight complex with proteins S10 and S14.</text>
</comment>
<comment type="similarity">
    <text evidence="1">Belongs to the universal ribosomal protein uS3 family.</text>
</comment>
<accession>Q0TCE7</accession>
<gene>
    <name evidence="1" type="primary">rpsC</name>
    <name type="ordered locus">ECP_3402</name>
</gene>
<feature type="chain" id="PRO_0000293788" description="Small ribosomal subunit protein uS3">
    <location>
        <begin position="1"/>
        <end position="233"/>
    </location>
</feature>
<feature type="domain" description="KH type-2" evidence="1">
    <location>
        <begin position="39"/>
        <end position="107"/>
    </location>
</feature>
<proteinExistence type="inferred from homology"/>
<sequence length="233" mass="25983">MGQKVHPNGIRLGIVKPWNSTWFANTKEFADNLDSDFKVRQYLTKELAKASVSRIVIERPAKSIRVTIHTARPGIVIGKKGEDVEKLRKVVADIAGVPAQINIAEVRKPELDAKLVADSITSQLERRVMFRRAMKRAVQNAMRLGAKGIKVEVSGRLGGAEIARTEWYREGRVPLHTLRADIDYNTSEAHTTYGVIGVKVWIFKGEILGGMAAVEQPEKPAAQPKKQQRKGRK</sequence>
<organism>
    <name type="scientific">Escherichia coli O6:K15:H31 (strain 536 / UPEC)</name>
    <dbReference type="NCBI Taxonomy" id="362663"/>
    <lineage>
        <taxon>Bacteria</taxon>
        <taxon>Pseudomonadati</taxon>
        <taxon>Pseudomonadota</taxon>
        <taxon>Gammaproteobacteria</taxon>
        <taxon>Enterobacterales</taxon>
        <taxon>Enterobacteriaceae</taxon>
        <taxon>Escherichia</taxon>
    </lineage>
</organism>
<evidence type="ECO:0000255" key="1">
    <source>
        <dbReference type="HAMAP-Rule" id="MF_01309"/>
    </source>
</evidence>
<evidence type="ECO:0000305" key="2"/>
<dbReference type="EMBL" id="CP000247">
    <property type="protein sequence ID" value="ABG71382.1"/>
    <property type="molecule type" value="Genomic_DNA"/>
</dbReference>
<dbReference type="RefSeq" id="WP_000529945.1">
    <property type="nucleotide sequence ID" value="NC_008253.1"/>
</dbReference>
<dbReference type="SMR" id="Q0TCE7"/>
<dbReference type="GeneID" id="97603663"/>
<dbReference type="KEGG" id="ecp:ECP_3402"/>
<dbReference type="HOGENOM" id="CLU_058591_0_2_6"/>
<dbReference type="Proteomes" id="UP000009182">
    <property type="component" value="Chromosome"/>
</dbReference>
<dbReference type="GO" id="GO:0022627">
    <property type="term" value="C:cytosolic small ribosomal subunit"/>
    <property type="evidence" value="ECO:0007669"/>
    <property type="project" value="TreeGrafter"/>
</dbReference>
<dbReference type="GO" id="GO:0003729">
    <property type="term" value="F:mRNA binding"/>
    <property type="evidence" value="ECO:0007669"/>
    <property type="project" value="UniProtKB-UniRule"/>
</dbReference>
<dbReference type="GO" id="GO:0019843">
    <property type="term" value="F:rRNA binding"/>
    <property type="evidence" value="ECO:0007669"/>
    <property type="project" value="UniProtKB-UniRule"/>
</dbReference>
<dbReference type="GO" id="GO:0003735">
    <property type="term" value="F:structural constituent of ribosome"/>
    <property type="evidence" value="ECO:0007669"/>
    <property type="project" value="InterPro"/>
</dbReference>
<dbReference type="GO" id="GO:0006412">
    <property type="term" value="P:translation"/>
    <property type="evidence" value="ECO:0007669"/>
    <property type="project" value="UniProtKB-UniRule"/>
</dbReference>
<dbReference type="CDD" id="cd02412">
    <property type="entry name" value="KH-II_30S_S3"/>
    <property type="match status" value="1"/>
</dbReference>
<dbReference type="FunFam" id="3.30.1140.32:FF:000001">
    <property type="entry name" value="30S ribosomal protein S3"/>
    <property type="match status" value="1"/>
</dbReference>
<dbReference type="FunFam" id="3.30.300.20:FF:000001">
    <property type="entry name" value="30S ribosomal protein S3"/>
    <property type="match status" value="1"/>
</dbReference>
<dbReference type="Gene3D" id="3.30.300.20">
    <property type="match status" value="1"/>
</dbReference>
<dbReference type="Gene3D" id="3.30.1140.32">
    <property type="entry name" value="Ribosomal protein S3, C-terminal domain"/>
    <property type="match status" value="1"/>
</dbReference>
<dbReference type="HAMAP" id="MF_01309_B">
    <property type="entry name" value="Ribosomal_uS3_B"/>
    <property type="match status" value="1"/>
</dbReference>
<dbReference type="InterPro" id="IPR004087">
    <property type="entry name" value="KH_dom"/>
</dbReference>
<dbReference type="InterPro" id="IPR015946">
    <property type="entry name" value="KH_dom-like_a/b"/>
</dbReference>
<dbReference type="InterPro" id="IPR004044">
    <property type="entry name" value="KH_dom_type_2"/>
</dbReference>
<dbReference type="InterPro" id="IPR009019">
    <property type="entry name" value="KH_sf_prok-type"/>
</dbReference>
<dbReference type="InterPro" id="IPR036419">
    <property type="entry name" value="Ribosomal_S3_C_sf"/>
</dbReference>
<dbReference type="InterPro" id="IPR005704">
    <property type="entry name" value="Ribosomal_uS3_bac-typ"/>
</dbReference>
<dbReference type="InterPro" id="IPR001351">
    <property type="entry name" value="Ribosomal_uS3_C"/>
</dbReference>
<dbReference type="InterPro" id="IPR018280">
    <property type="entry name" value="Ribosomal_uS3_CS"/>
</dbReference>
<dbReference type="NCBIfam" id="TIGR01009">
    <property type="entry name" value="rpsC_bact"/>
    <property type="match status" value="1"/>
</dbReference>
<dbReference type="PANTHER" id="PTHR11760">
    <property type="entry name" value="30S/40S RIBOSOMAL PROTEIN S3"/>
    <property type="match status" value="1"/>
</dbReference>
<dbReference type="PANTHER" id="PTHR11760:SF19">
    <property type="entry name" value="SMALL RIBOSOMAL SUBUNIT PROTEIN US3C"/>
    <property type="match status" value="1"/>
</dbReference>
<dbReference type="Pfam" id="PF07650">
    <property type="entry name" value="KH_2"/>
    <property type="match status" value="1"/>
</dbReference>
<dbReference type="Pfam" id="PF00189">
    <property type="entry name" value="Ribosomal_S3_C"/>
    <property type="match status" value="1"/>
</dbReference>
<dbReference type="SMART" id="SM00322">
    <property type="entry name" value="KH"/>
    <property type="match status" value="1"/>
</dbReference>
<dbReference type="SUPFAM" id="SSF54814">
    <property type="entry name" value="Prokaryotic type KH domain (KH-domain type II)"/>
    <property type="match status" value="1"/>
</dbReference>
<dbReference type="SUPFAM" id="SSF54821">
    <property type="entry name" value="Ribosomal protein S3 C-terminal domain"/>
    <property type="match status" value="1"/>
</dbReference>
<dbReference type="PROSITE" id="PS50823">
    <property type="entry name" value="KH_TYPE_2"/>
    <property type="match status" value="1"/>
</dbReference>
<dbReference type="PROSITE" id="PS00548">
    <property type="entry name" value="RIBOSOMAL_S3"/>
    <property type="match status" value="1"/>
</dbReference>
<keyword id="KW-0687">Ribonucleoprotein</keyword>
<keyword id="KW-0689">Ribosomal protein</keyword>
<keyword id="KW-0694">RNA-binding</keyword>
<keyword id="KW-0699">rRNA-binding</keyword>
<name>RS3_ECOL5</name>